<keyword id="KW-0002">3D-structure</keyword>
<keyword id="KW-0012">Acyltransferase</keyword>
<keyword id="KW-0045">Antibiotic biosynthesis</keyword>
<keyword id="KW-0511">Multifunctional enzyme</keyword>
<keyword id="KW-0521">NADP</keyword>
<keyword id="KW-0596">Phosphopantetheine</keyword>
<keyword id="KW-0597">Phosphoprotein</keyword>
<keyword id="KW-0677">Repeat</keyword>
<keyword id="KW-0808">Transferase</keyword>
<name>PIKA1_STRVZ</name>
<reference key="1">
    <citation type="journal article" date="1998" name="Proc. Natl. Acad. Sci. U.S.A.">
        <title>A gene cluster for macrolide antibiotic biosynthesis in Streptomyces venezuelae: architecture of metabolic diversity.</title>
        <authorList>
            <person name="Xue Y."/>
            <person name="Zhao L."/>
            <person name="Liu H.W."/>
            <person name="Sherman D.H."/>
        </authorList>
    </citation>
    <scope>NUCLEOTIDE SEQUENCE [GENOMIC DNA]</scope>
    <scope>PATHWAY</scope>
    <scope>DISRUPTION PHENOTYPE</scope>
    <source>
        <strain>ATCC 15439 / DSM 41110 / IMRU3627 / M-2140</strain>
    </source>
</reference>
<reference key="2">
    <citation type="journal article" date="1999" name="Chem. Biol.">
        <title>Elucidating the mechanism of chain termination switching in the picromycin/methymycin polyketide synthase.</title>
        <authorList>
            <person name="Tang L."/>
            <person name="Fu H."/>
            <person name="Betlach M.C."/>
            <person name="McDaniel R."/>
        </authorList>
    </citation>
    <scope>FUNCTION</scope>
    <scope>CATALYTIC ACTIVITY</scope>
</reference>
<reference key="3">
    <citation type="journal article" date="2008" name="ChemBioChem">
        <title>Generation of novel pikromycin antibiotic products through mutasynthesis.</title>
        <authorList>
            <person name="Gupta S."/>
            <person name="Lakshmanan V."/>
            <person name="Kim B.S."/>
            <person name="Fecik R."/>
            <person name="Reynolds K.A."/>
        </authorList>
    </citation>
    <scope>FUNCTION</scope>
    <scope>DISRUPTION PHENOTYPE</scope>
</reference>
<reference key="4">
    <citation type="journal article" date="2009" name="ChemBioChem">
        <title>Functional dissection of a multimodular polypeptide of the pikromycin polyketide synthase into monomodules by using a matched pair of heterologous docking domains.</title>
        <authorList>
            <person name="Yan J."/>
            <person name="Gupta S."/>
            <person name="Sherman D.H."/>
            <person name="Reynolds K.A."/>
        </authorList>
    </citation>
    <scope>FUNCTION</scope>
    <scope>CATALYTIC ACTIVITY</scope>
    <scope>MUTAGENESIS OF CYS-1281</scope>
    <scope>SUBUNIT</scope>
    <scope>ACTIVE SITE</scope>
</reference>
<reference key="5">
    <citation type="journal article" date="2009" name="Bioorg. Med. Chem.">
        <title>The methymycin/pikromycin pathway: a model for metabolic diversity in natural product biosynthesis.</title>
        <authorList>
            <person name="Kittendorf J.D."/>
            <person name="Sherman D.H."/>
        </authorList>
    </citation>
    <scope>FUNCTION</scope>
    <scope>PATHWAY</scope>
    <scope>COFACTOR</scope>
    <scope>SUBUNIT</scope>
</reference>
<comment type="function">
    <text evidence="10 11 12 17">Involved in the biosynthesis of 12- and 14-membered ring macrolactone antibiotics such as methymycin and neomethymycin, and pikromycin and narbomycin, respectively. Component of the pikromycin PKS which catalyzes the biosynthesis of both precursors 10-deoxymethynolide (12-membered ring macrolactone) and narbonolide (14-membered ring macrolactone) (PubMed:18512859, PubMed:19437523). Chain elongation through PikAI, PikAII and PikAIII followed by thioesterase catalyzed termination results in the production of 10-deoxymethynolide, while continued elongation through PikAIV, followed by thioesterase (TE) catalyzed cyclization results in the biosynthesis of the narbonolide.</text>
</comment>
<comment type="catalytic activity">
    <reaction evidence="10 18">
        <text>5 (S)-methylmalonyl-CoA + malonyl-CoA + 5 NADPH + 11 H(+) = 10-deoxymethynolide + 6 CO2 + 5 NADP(+) + 6 CoA + 2 H2O</text>
        <dbReference type="Rhea" id="RHEA:43056"/>
        <dbReference type="ChEBI" id="CHEBI:15377"/>
        <dbReference type="ChEBI" id="CHEBI:15378"/>
        <dbReference type="ChEBI" id="CHEBI:16526"/>
        <dbReference type="ChEBI" id="CHEBI:29461"/>
        <dbReference type="ChEBI" id="CHEBI:57287"/>
        <dbReference type="ChEBI" id="CHEBI:57327"/>
        <dbReference type="ChEBI" id="CHEBI:57384"/>
        <dbReference type="ChEBI" id="CHEBI:57783"/>
        <dbReference type="ChEBI" id="CHEBI:58349"/>
        <dbReference type="EC" id="2.3.1.239"/>
    </reaction>
</comment>
<comment type="catalytic activity">
    <reaction evidence="10 18">
        <text>6 (S)-methylmalonyl-CoA + malonyl-CoA + 5 NADPH + 12 H(+) = narbonolide + 7 CO2 + 5 NADP(+) + 7 CoA + 2 H2O</text>
        <dbReference type="Rhea" id="RHEA:42844"/>
        <dbReference type="ChEBI" id="CHEBI:15377"/>
        <dbReference type="ChEBI" id="CHEBI:15378"/>
        <dbReference type="ChEBI" id="CHEBI:16526"/>
        <dbReference type="ChEBI" id="CHEBI:29650"/>
        <dbReference type="ChEBI" id="CHEBI:57287"/>
        <dbReference type="ChEBI" id="CHEBI:57327"/>
        <dbReference type="ChEBI" id="CHEBI:57384"/>
        <dbReference type="ChEBI" id="CHEBI:57783"/>
        <dbReference type="ChEBI" id="CHEBI:58349"/>
        <dbReference type="EC" id="2.3.1.240"/>
    </reaction>
</comment>
<comment type="cofactor">
    <cofactor evidence="17">
        <name>pantetheine 4'-phosphate</name>
        <dbReference type="ChEBI" id="CHEBI:47942"/>
    </cofactor>
    <text evidence="16">Binds 3 phosphopantetheines covalently.</text>
</comment>
<comment type="pathway">
    <text evidence="17 19">Antibiotic biosynthesis.</text>
</comment>
<comment type="subunit">
    <text evidence="1 4 17 18">Homodimer (By similarity). Pikromycin PKS consists of a combination of multimodular (PikAI and PikAII) and monomodular (PikAIII and PikAIV) polypeptides each coding for a functional synthase subunit which participates in 1 (monomodular) or 2 (multimodular) of the six FAS-like elongation steps required for formation of the polyketide. Module 1, 2, 3, 4, 5, and 6 participating in biosynthesis steps 1, 2, 3, 4, 5, and 6, respectively.</text>
</comment>
<comment type="disruption phenotype">
    <text evidence="11 13">Cells lacking this gene are unable to produce methymycin, neomethymycin, narbomycin and pikromycin.</text>
</comment>
<comment type="miscellaneous">
    <text evidence="17">Type I modular polyketide synthases (PKSs) catalyze the step-wise condensation of simple carboxylic acid derivatives. Organizationally, type I PKSs are arranged into modules, wherein each module is comprised of a set of catalytic activities that is responsible for a single elongation of the polyketide chain and the appropriate reductive processing of the beta-keto functionality. A minimal elongation module contains an acyl transferase (AT) domain, an acyl-carrier protein (ACP) domain, and a ketosynthase (KS) domain. The AT domain is responsible for loading the methylmalonyl-CoA extender unit onto the phosphopantetheinylated ACP domain. Subsequently, the KS domain decarboxylates and then condenses the ACP-bound extender unit with the growing polyketide chain obtained from the preceding module to yield an ACP-bound beta-ketoacyl intermediate. In addition to the three core domains, each elongation module may contain up to three additional domains: a ketoreductase (KR), dehydratase (DH), and an enoyl reductase (ER) that are responsible for the reductive processing of the beta-keto functionality prior to the next extension step. The presence of a KR domain alone gives rise to a beta-hydroxyl functionality, the presence of both a KR and a DH domain generates an alkene, while the combination of KR, DH, and ER results in complete reduction to the alkane. Finally, a thioesterase (TE) domain, typically found at the terminus of the last elongation module, catalyzes the termination of polyketide biosynthesis. The activity of this domain results in cleavage of the acyl chain from the adjacent ACP and formation of the macrocyclic ring.</text>
</comment>
<organism>
    <name type="scientific">Streptomyces venezuelae</name>
    <dbReference type="NCBI Taxonomy" id="54571"/>
    <lineage>
        <taxon>Bacteria</taxon>
        <taxon>Bacillati</taxon>
        <taxon>Actinomycetota</taxon>
        <taxon>Actinomycetes</taxon>
        <taxon>Kitasatosporales</taxon>
        <taxon>Streptomycetaceae</taxon>
        <taxon>Streptomyces</taxon>
    </lineage>
</organism>
<dbReference type="EC" id="2.3.1.239" evidence="10 18"/>
<dbReference type="EC" id="2.3.1.240" evidence="10 18"/>
<dbReference type="EMBL" id="AF079138">
    <property type="protein sequence ID" value="AAC69329.1"/>
    <property type="molecule type" value="Genomic_DNA"/>
</dbReference>
<dbReference type="PIR" id="T17409">
    <property type="entry name" value="T17409"/>
</dbReference>
<dbReference type="PDB" id="7UWR">
    <property type="method" value="EM"/>
    <property type="resolution" value="2.61 A"/>
    <property type="chains" value="A/B=89-974"/>
</dbReference>
<dbReference type="PDB" id="8CZC">
    <property type="method" value="EM"/>
    <property type="resolution" value="2.86 A"/>
    <property type="chains" value="B=628-942"/>
</dbReference>
<dbReference type="PDBsum" id="7UWR"/>
<dbReference type="PDBsum" id="8CZC"/>
<dbReference type="EMDB" id="EMD-26839"/>
<dbReference type="EMDB" id="EMD-27094"/>
<dbReference type="SMR" id="Q9ZGI5"/>
<dbReference type="KEGG" id="ag:AAC69329"/>
<dbReference type="BioCyc" id="MetaCyc:MONOMER-18411"/>
<dbReference type="BRENDA" id="2.3.1.239">
    <property type="organism ID" value="6106"/>
</dbReference>
<dbReference type="BRENDA" id="2.3.1.240">
    <property type="organism ID" value="6106"/>
</dbReference>
<dbReference type="GO" id="GO:0004315">
    <property type="term" value="F:3-oxoacyl-[acyl-carrier-protein] synthase activity"/>
    <property type="evidence" value="ECO:0007669"/>
    <property type="project" value="InterPro"/>
</dbReference>
<dbReference type="GO" id="GO:0016747">
    <property type="term" value="F:acyltransferase activity, transferring groups other than amino-acyl groups"/>
    <property type="evidence" value="ECO:0000314"/>
    <property type="project" value="UniProtKB"/>
</dbReference>
<dbReference type="GO" id="GO:0004312">
    <property type="term" value="F:fatty acid synthase activity"/>
    <property type="evidence" value="ECO:0007669"/>
    <property type="project" value="TreeGrafter"/>
</dbReference>
<dbReference type="GO" id="GO:0031177">
    <property type="term" value="F:phosphopantetheine binding"/>
    <property type="evidence" value="ECO:0000304"/>
    <property type="project" value="UniProtKB"/>
</dbReference>
<dbReference type="GO" id="GO:0006633">
    <property type="term" value="P:fatty acid biosynthetic process"/>
    <property type="evidence" value="ECO:0007669"/>
    <property type="project" value="InterPro"/>
</dbReference>
<dbReference type="GO" id="GO:0033068">
    <property type="term" value="P:macrolide biosynthetic process"/>
    <property type="evidence" value="ECO:0000314"/>
    <property type="project" value="UniProtKB"/>
</dbReference>
<dbReference type="CDD" id="cd08952">
    <property type="entry name" value="KR_1_SDR_x"/>
    <property type="match status" value="1"/>
</dbReference>
<dbReference type="CDD" id="cd08956">
    <property type="entry name" value="KR_3_FAS_SDR_x"/>
    <property type="match status" value="1"/>
</dbReference>
<dbReference type="CDD" id="cd00833">
    <property type="entry name" value="PKS"/>
    <property type="match status" value="3"/>
</dbReference>
<dbReference type="FunFam" id="3.40.50.720:FF:000550">
    <property type="entry name" value="AmphB polyketide synthase"/>
    <property type="match status" value="1"/>
</dbReference>
<dbReference type="FunFam" id="3.40.50.720:FF:001809">
    <property type="entry name" value="Narbonolide/10-deoxymethynolide synthase PikA1, modules 1 and 2"/>
    <property type="match status" value="1"/>
</dbReference>
<dbReference type="FunFam" id="3.40.47.10:FF:000019">
    <property type="entry name" value="Polyketide synthase type I"/>
    <property type="match status" value="3"/>
</dbReference>
<dbReference type="FunFam" id="3.40.366.10:FF:000002">
    <property type="entry name" value="Probable polyketide synthase 2"/>
    <property type="match status" value="3"/>
</dbReference>
<dbReference type="FunFam" id="1.10.1200.10:FF:000007">
    <property type="entry name" value="Probable polyketide synthase pks17"/>
    <property type="match status" value="2"/>
</dbReference>
<dbReference type="Gene3D" id="3.30.70.3290">
    <property type="match status" value="3"/>
</dbReference>
<dbReference type="Gene3D" id="3.40.47.10">
    <property type="match status" value="3"/>
</dbReference>
<dbReference type="Gene3D" id="1.10.1200.10">
    <property type="entry name" value="ACP-like"/>
    <property type="match status" value="3"/>
</dbReference>
<dbReference type="Gene3D" id="3.40.366.10">
    <property type="entry name" value="Malonyl-Coenzyme A Acyl Carrier Protein, domain 2"/>
    <property type="match status" value="3"/>
</dbReference>
<dbReference type="Gene3D" id="3.40.50.720">
    <property type="entry name" value="NAD(P)-binding Rossmann-like Domain"/>
    <property type="match status" value="2"/>
</dbReference>
<dbReference type="Gene3D" id="3.10.129.110">
    <property type="entry name" value="Polyketide synthase dehydratase"/>
    <property type="match status" value="1"/>
</dbReference>
<dbReference type="InterPro" id="IPR001227">
    <property type="entry name" value="Ac_transferase_dom_sf"/>
</dbReference>
<dbReference type="InterPro" id="IPR036736">
    <property type="entry name" value="ACP-like_sf"/>
</dbReference>
<dbReference type="InterPro" id="IPR014043">
    <property type="entry name" value="Acyl_transferase_dom"/>
</dbReference>
<dbReference type="InterPro" id="IPR016035">
    <property type="entry name" value="Acyl_Trfase/lysoPLipase"/>
</dbReference>
<dbReference type="InterPro" id="IPR018201">
    <property type="entry name" value="Ketoacyl_synth_AS"/>
</dbReference>
<dbReference type="InterPro" id="IPR014031">
    <property type="entry name" value="Ketoacyl_synth_C"/>
</dbReference>
<dbReference type="InterPro" id="IPR014030">
    <property type="entry name" value="Ketoacyl_synth_N"/>
</dbReference>
<dbReference type="InterPro" id="IPR016036">
    <property type="entry name" value="Malonyl_transacylase_ACP-bd"/>
</dbReference>
<dbReference type="InterPro" id="IPR036291">
    <property type="entry name" value="NAD(P)-bd_dom_sf"/>
</dbReference>
<dbReference type="InterPro" id="IPR032821">
    <property type="entry name" value="PKS_assoc"/>
</dbReference>
<dbReference type="InterPro" id="IPR020841">
    <property type="entry name" value="PKS_Beta-ketoAc_synthase_dom"/>
</dbReference>
<dbReference type="InterPro" id="IPR042104">
    <property type="entry name" value="PKS_dehydratase_sf"/>
</dbReference>
<dbReference type="InterPro" id="IPR020807">
    <property type="entry name" value="PKS_DH"/>
</dbReference>
<dbReference type="InterPro" id="IPR049551">
    <property type="entry name" value="PKS_DH_C"/>
</dbReference>
<dbReference type="InterPro" id="IPR049552">
    <property type="entry name" value="PKS_DH_N"/>
</dbReference>
<dbReference type="InterPro" id="IPR013968">
    <property type="entry name" value="PKS_KR"/>
</dbReference>
<dbReference type="InterPro" id="IPR049900">
    <property type="entry name" value="PKS_mFAS_DH"/>
</dbReference>
<dbReference type="InterPro" id="IPR050091">
    <property type="entry name" value="PKS_NRPS_Biosynth_Enz"/>
</dbReference>
<dbReference type="InterPro" id="IPR020806">
    <property type="entry name" value="PKS_PP-bd"/>
</dbReference>
<dbReference type="InterPro" id="IPR009081">
    <property type="entry name" value="PP-bd_ACP"/>
</dbReference>
<dbReference type="InterPro" id="IPR006162">
    <property type="entry name" value="Ppantetheine_attach_site"/>
</dbReference>
<dbReference type="InterPro" id="IPR054514">
    <property type="entry name" value="RhiE-like_linker"/>
</dbReference>
<dbReference type="InterPro" id="IPR055123">
    <property type="entry name" value="SpnB-like_Rossmann"/>
</dbReference>
<dbReference type="InterPro" id="IPR016039">
    <property type="entry name" value="Thiolase-like"/>
</dbReference>
<dbReference type="PANTHER" id="PTHR43775">
    <property type="entry name" value="FATTY ACID SYNTHASE"/>
    <property type="match status" value="1"/>
</dbReference>
<dbReference type="PANTHER" id="PTHR43775:SF51">
    <property type="entry name" value="INACTIVE PHENOLPHTHIOCEROL SYNTHESIS POLYKETIDE SYNTHASE TYPE I PKS1-RELATED"/>
    <property type="match status" value="1"/>
</dbReference>
<dbReference type="Pfam" id="PF00698">
    <property type="entry name" value="Acyl_transf_1"/>
    <property type="match status" value="3"/>
</dbReference>
<dbReference type="Pfam" id="PF16197">
    <property type="entry name" value="KAsynt_C_assoc"/>
    <property type="match status" value="3"/>
</dbReference>
<dbReference type="Pfam" id="PF00109">
    <property type="entry name" value="ketoacyl-synt"/>
    <property type="match status" value="3"/>
</dbReference>
<dbReference type="Pfam" id="PF02801">
    <property type="entry name" value="Ketoacyl-synt_C"/>
    <property type="match status" value="3"/>
</dbReference>
<dbReference type="Pfam" id="PF08659">
    <property type="entry name" value="KR"/>
    <property type="match status" value="2"/>
</dbReference>
<dbReference type="Pfam" id="PF21089">
    <property type="entry name" value="PKS_DH_N"/>
    <property type="match status" value="1"/>
</dbReference>
<dbReference type="Pfam" id="PF00550">
    <property type="entry name" value="PP-binding"/>
    <property type="match status" value="3"/>
</dbReference>
<dbReference type="Pfam" id="PF14765">
    <property type="entry name" value="PS-DH"/>
    <property type="match status" value="1"/>
</dbReference>
<dbReference type="Pfam" id="PF22336">
    <property type="entry name" value="RhiE-like_linker"/>
    <property type="match status" value="1"/>
</dbReference>
<dbReference type="Pfam" id="PF22953">
    <property type="entry name" value="SpnB_Rossmann"/>
    <property type="match status" value="1"/>
</dbReference>
<dbReference type="SMART" id="SM00827">
    <property type="entry name" value="PKS_AT"/>
    <property type="match status" value="3"/>
</dbReference>
<dbReference type="SMART" id="SM00826">
    <property type="entry name" value="PKS_DH"/>
    <property type="match status" value="1"/>
</dbReference>
<dbReference type="SMART" id="SM00822">
    <property type="entry name" value="PKS_KR"/>
    <property type="match status" value="2"/>
</dbReference>
<dbReference type="SMART" id="SM00825">
    <property type="entry name" value="PKS_KS"/>
    <property type="match status" value="3"/>
</dbReference>
<dbReference type="SMART" id="SM00823">
    <property type="entry name" value="PKS_PP"/>
    <property type="match status" value="3"/>
</dbReference>
<dbReference type="SMART" id="SM01294">
    <property type="entry name" value="PKS_PP_betabranch"/>
    <property type="match status" value="3"/>
</dbReference>
<dbReference type="SUPFAM" id="SSF47336">
    <property type="entry name" value="ACP-like"/>
    <property type="match status" value="3"/>
</dbReference>
<dbReference type="SUPFAM" id="SSF52151">
    <property type="entry name" value="FabD/lysophospholipase-like"/>
    <property type="match status" value="3"/>
</dbReference>
<dbReference type="SUPFAM" id="SSF51735">
    <property type="entry name" value="NAD(P)-binding Rossmann-fold domains"/>
    <property type="match status" value="4"/>
</dbReference>
<dbReference type="SUPFAM" id="SSF55048">
    <property type="entry name" value="Probable ACP-binding domain of malonyl-CoA ACP transacylase"/>
    <property type="match status" value="3"/>
</dbReference>
<dbReference type="SUPFAM" id="SSF53901">
    <property type="entry name" value="Thiolase-like"/>
    <property type="match status" value="3"/>
</dbReference>
<dbReference type="PROSITE" id="PS50075">
    <property type="entry name" value="CARRIER"/>
    <property type="match status" value="3"/>
</dbReference>
<dbReference type="PROSITE" id="PS00606">
    <property type="entry name" value="KS3_1"/>
    <property type="match status" value="2"/>
</dbReference>
<dbReference type="PROSITE" id="PS52004">
    <property type="entry name" value="KS3_2"/>
    <property type="match status" value="3"/>
</dbReference>
<dbReference type="PROSITE" id="PS00012">
    <property type="entry name" value="PHOSPHOPANTETHEINE"/>
    <property type="match status" value="2"/>
</dbReference>
<dbReference type="PROSITE" id="PS52019">
    <property type="entry name" value="PKS_MFAS_DH"/>
    <property type="match status" value="1"/>
</dbReference>
<feature type="chain" id="PRO_0000436357" description="Pikromycin polyketide synthase component PikAI">
    <location>
        <begin position="1"/>
        <end position="4613"/>
    </location>
</feature>
<feature type="domain" description="Ketosynthase family 3 (KS3) 1" evidence="6">
    <location>
        <begin position="88"/>
        <end position="515"/>
    </location>
</feature>
<feature type="domain" description="Carrier 1" evidence="5">
    <location>
        <begin position="1007"/>
        <end position="1085"/>
    </location>
</feature>
<feature type="domain" description="Ketosynthase family 3 (KS3) 2" evidence="6">
    <location>
        <begin position="1108"/>
        <end position="1536"/>
    </location>
</feature>
<feature type="domain" description="Carrier 2" evidence="5">
    <location>
        <begin position="2495"/>
        <end position="2570"/>
    </location>
</feature>
<feature type="domain" description="Ketosynthase family 3 (KS3) 3" evidence="6">
    <location>
        <begin position="2603"/>
        <end position="3029"/>
    </location>
</feature>
<feature type="domain" description="PKS/mFAS DH" evidence="7">
    <location>
        <begin position="3579"/>
        <end position="3878"/>
    </location>
</feature>
<feature type="domain" description="Carrier 3" evidence="5">
    <location>
        <begin position="4404"/>
        <end position="4482"/>
    </location>
</feature>
<feature type="region of interest" description="Disordered" evidence="9">
    <location>
        <begin position="1"/>
        <end position="20"/>
    </location>
</feature>
<feature type="region of interest" description="Disordered" evidence="9">
    <location>
        <begin position="31"/>
        <end position="52"/>
    </location>
</feature>
<feature type="region of interest" description="Loading domain" evidence="16">
    <location>
        <begin position="91"/>
        <end position="1082"/>
    </location>
</feature>
<feature type="region of interest" description="Acyltransferase 1" evidence="16">
    <location>
        <begin position="634"/>
        <end position="917"/>
    </location>
</feature>
<feature type="region of interest" description="Module 1" evidence="16">
    <location>
        <begin position="1111"/>
        <end position="2567"/>
    </location>
</feature>
<feature type="region of interest" description="Acyltransferase 2" evidence="16">
    <location>
        <begin position="1650"/>
        <end position="1956"/>
    </location>
</feature>
<feature type="region of interest" description="Beta-ketoacyl reductase 1" evidence="16">
    <location>
        <begin position="2208"/>
        <end position="2385"/>
    </location>
</feature>
<feature type="region of interest" description="Module 2" evidence="16">
    <location>
        <begin position="2606"/>
        <end position="4479"/>
    </location>
</feature>
<feature type="region of interest" description="Disordered" evidence="9">
    <location>
        <begin position="3057"/>
        <end position="3079"/>
    </location>
</feature>
<feature type="region of interest" description="Acyltransferase 3" evidence="16">
    <location>
        <begin position="3180"/>
        <end position="3470"/>
    </location>
</feature>
<feature type="region of interest" description="Disordered" evidence="9">
    <location>
        <begin position="3471"/>
        <end position="3493"/>
    </location>
</feature>
<feature type="region of interest" description="Dehydratase" evidence="16">
    <location>
        <begin position="3579"/>
        <end position="3877"/>
    </location>
</feature>
<feature type="region of interest" description="N-terminal hotdog fold" evidence="7">
    <location>
        <begin position="3579"/>
        <end position="3712"/>
    </location>
</feature>
<feature type="region of interest" description="C-terminal hotdog fold" evidence="7">
    <location>
        <begin position="3727"/>
        <end position="3878"/>
    </location>
</feature>
<feature type="region of interest" description="Beta-ketoacyl reductase 2" evidence="16">
    <location>
        <begin position="4100"/>
        <end position="4281"/>
    </location>
</feature>
<feature type="region of interest" description="Disordered" evidence="9">
    <location>
        <begin position="4363"/>
        <end position="4383"/>
    </location>
</feature>
<feature type="region of interest" description="Disordered" evidence="9">
    <location>
        <begin position="4483"/>
        <end position="4508"/>
    </location>
</feature>
<feature type="region of interest" description="Disordered" evidence="9">
    <location>
        <begin position="4551"/>
        <end position="4613"/>
    </location>
</feature>
<feature type="compositionally biased region" description="Low complexity" evidence="9">
    <location>
        <begin position="3472"/>
        <end position="3493"/>
    </location>
</feature>
<feature type="compositionally biased region" description="Polar residues" evidence="9">
    <location>
        <begin position="4495"/>
        <end position="4508"/>
    </location>
</feature>
<feature type="compositionally biased region" description="Low complexity" evidence="9">
    <location>
        <begin position="4551"/>
        <end position="4565"/>
    </location>
</feature>
<feature type="active site" description="Acyl-ester intermediate; for acyltransferase 1 activity" evidence="16">
    <location>
        <position position="724"/>
    </location>
</feature>
<feature type="active site" description="Acyl-thioester intermediate; for beta-ketoacyl synthase 1 activity" evidence="6 18">
    <location>
        <position position="1281"/>
    </location>
</feature>
<feature type="active site" description="For beta-ketoacyl synthase 1 activity" evidence="6">
    <location>
        <position position="1416"/>
    </location>
</feature>
<feature type="active site" description="For beta-ketoacyl synthase 1 activity" evidence="6">
    <location>
        <position position="1456"/>
    </location>
</feature>
<feature type="active site" description="Acyl-ester intermediate; for acyltransferase 2 activity" evidence="3 8">
    <location>
        <position position="1740"/>
    </location>
</feature>
<feature type="active site" description="For beta-ketoacyl reductase 1 activity" evidence="1 2">
    <location>
        <position position="2355"/>
    </location>
</feature>
<feature type="active site" description="Acyl-thioester intermediate; for beta-ketoacyl synthase 2 activity" evidence="6">
    <location>
        <position position="2776"/>
    </location>
</feature>
<feature type="active site" description="For beta-ketoacyl synthase 2 activity" evidence="6">
    <location>
        <position position="2911"/>
    </location>
</feature>
<feature type="active site" description="For beta-ketoacyl synthase 2 activity" evidence="6">
    <location>
        <position position="2951"/>
    </location>
</feature>
<feature type="active site" description="Acyl-ester intermediate; for acyltransferase 3 activity" evidence="3 8">
    <location>
        <position position="3273"/>
    </location>
</feature>
<feature type="active site" description="Proton acceptor; for dehydratase activity" evidence="7">
    <location>
        <position position="3611"/>
    </location>
</feature>
<feature type="active site" description="Proton donor; for dehydratase activity" evidence="7">
    <location>
        <position position="3800"/>
    </location>
</feature>
<feature type="active site" description="For beta-ketoacyl reductase 2 activity" evidence="1 2">
    <location>
        <position position="4250"/>
    </location>
</feature>
<feature type="binding site" evidence="1">
    <location>
        <begin position="2216"/>
        <end position="2219"/>
    </location>
    <ligand>
        <name>NADP(+)</name>
        <dbReference type="ChEBI" id="CHEBI:58349"/>
        <label>1</label>
        <note>for beta-ketoacyl reductase 1 activity</note>
    </ligand>
</feature>
<feature type="binding site" evidence="1">
    <location>
        <begin position="2239"/>
        <end position="2242"/>
    </location>
    <ligand>
        <name>NADP(+)</name>
        <dbReference type="ChEBI" id="CHEBI:58349"/>
        <label>1</label>
        <note>for beta-ketoacyl reductase 1 activity</note>
    </ligand>
</feature>
<feature type="binding site" evidence="1">
    <location>
        <begin position="2268"/>
        <end position="2269"/>
    </location>
    <ligand>
        <name>NADP(+)</name>
        <dbReference type="ChEBI" id="CHEBI:58349"/>
        <label>1</label>
        <note>for beta-ketoacyl reductase 1 activity</note>
    </ligand>
</feature>
<feature type="binding site" evidence="1">
    <location>
        <position position="2318"/>
    </location>
    <ligand>
        <name>NADP(+)</name>
        <dbReference type="ChEBI" id="CHEBI:58349"/>
        <label>1</label>
        <note>for beta-ketoacyl reductase 1 activity</note>
    </ligand>
</feature>
<feature type="binding site" evidence="1">
    <location>
        <begin position="2340"/>
        <end position="2341"/>
    </location>
    <ligand>
        <name>NADP(+)</name>
        <dbReference type="ChEBI" id="CHEBI:58349"/>
        <label>1</label>
        <note>for beta-ketoacyl reductase 1 activity</note>
    </ligand>
</feature>
<feature type="binding site" evidence="16">
    <location>
        <begin position="4108"/>
        <end position="4111"/>
    </location>
    <ligand>
        <name>NADP(+)</name>
        <dbReference type="ChEBI" id="CHEBI:58349"/>
        <label>2</label>
        <note>for beta-ketoacyl reductase 2 activity</note>
    </ligand>
</feature>
<feature type="binding site" evidence="16">
    <location>
        <begin position="4132"/>
        <end position="4135"/>
    </location>
    <ligand>
        <name>NADP(+)</name>
        <dbReference type="ChEBI" id="CHEBI:58349"/>
        <label>2</label>
        <note>for beta-ketoacyl reductase 2 activity</note>
    </ligand>
</feature>
<feature type="binding site" evidence="16">
    <location>
        <begin position="4161"/>
        <end position="4162"/>
    </location>
    <ligand>
        <name>NADP(+)</name>
        <dbReference type="ChEBI" id="CHEBI:58349"/>
        <label>2</label>
        <note>for beta-ketoacyl reductase 2 activity</note>
    </ligand>
</feature>
<feature type="binding site" evidence="16">
    <location>
        <position position="4211"/>
    </location>
    <ligand>
        <name>NADP(+)</name>
        <dbReference type="ChEBI" id="CHEBI:58349"/>
        <label>2</label>
        <note>for beta-ketoacyl reductase 2 activity</note>
    </ligand>
</feature>
<feature type="binding site" evidence="16">
    <location>
        <begin position="4235"/>
        <end position="4236"/>
    </location>
    <ligand>
        <name>NADP(+)</name>
        <dbReference type="ChEBI" id="CHEBI:58349"/>
        <label>2</label>
        <note>for beta-ketoacyl reductase 2 activity</note>
    </ligand>
</feature>
<feature type="modified residue" description="O-(pantetheine 4'-phosphoryl)serine" evidence="5">
    <location>
        <position position="1045"/>
    </location>
</feature>
<feature type="modified residue" description="O-(pantetheine 4'-phosphoryl)serine" evidence="5">
    <location>
        <position position="2530"/>
    </location>
</feature>
<feature type="modified residue" description="O-(pantetheine 4'-phosphoryl)serine" evidence="5">
    <location>
        <position position="4442"/>
    </location>
</feature>
<feature type="mutagenesis site" description="Does not produce any detectable levels of methymycin or pikromycin." evidence="12">
    <original>C</original>
    <variation>A</variation>
    <location>
        <position position="1281"/>
    </location>
</feature>
<feature type="strand" evidence="20">
    <location>
        <begin position="91"/>
        <end position="100"/>
    </location>
</feature>
<feature type="strand" evidence="20">
    <location>
        <begin position="103"/>
        <end position="105"/>
    </location>
</feature>
<feature type="helix" evidence="20">
    <location>
        <begin position="106"/>
        <end position="114"/>
    </location>
</feature>
<feature type="turn" evidence="20">
    <location>
        <begin position="125"/>
        <end position="127"/>
    </location>
</feature>
<feature type="helix" evidence="20">
    <location>
        <begin position="131"/>
        <end position="133"/>
    </location>
</feature>
<feature type="strand" evidence="20">
    <location>
        <begin position="148"/>
        <end position="150"/>
    </location>
</feature>
<feature type="turn" evidence="20">
    <location>
        <begin position="153"/>
        <end position="156"/>
    </location>
</feature>
<feature type="turn" evidence="20">
    <location>
        <begin position="160"/>
        <end position="164"/>
    </location>
</feature>
<feature type="helix" evidence="20">
    <location>
        <begin position="167"/>
        <end position="172"/>
    </location>
</feature>
<feature type="helix" evidence="20">
    <location>
        <begin position="175"/>
        <end position="190"/>
    </location>
</feature>
<feature type="helix" evidence="20">
    <location>
        <begin position="195"/>
        <end position="198"/>
    </location>
</feature>
<feature type="strand" evidence="20">
    <location>
        <begin position="203"/>
        <end position="208"/>
    </location>
</feature>
<feature type="helix" evidence="20">
    <location>
        <begin position="213"/>
        <end position="220"/>
    </location>
</feature>
<feature type="helix" evidence="20">
    <location>
        <begin position="230"/>
        <end position="234"/>
    </location>
</feature>
<feature type="helix" evidence="20">
    <location>
        <begin position="237"/>
        <end position="247"/>
    </location>
</feature>
<feature type="strand" evidence="20">
    <location>
        <begin position="253"/>
        <end position="257"/>
    </location>
</feature>
<feature type="helix" evidence="20">
    <location>
        <begin position="259"/>
        <end position="261"/>
    </location>
</feature>
<feature type="helix" evidence="20">
    <location>
        <begin position="262"/>
        <end position="275"/>
    </location>
</feature>
<feature type="strand" evidence="20">
    <location>
        <begin position="280"/>
        <end position="288"/>
    </location>
</feature>
<feature type="helix" evidence="20">
    <location>
        <begin position="293"/>
        <end position="302"/>
    </location>
</feature>
<feature type="strand" evidence="20">
    <location>
        <begin position="326"/>
        <end position="334"/>
    </location>
</feature>
<feature type="helix" evidence="20">
    <location>
        <begin position="335"/>
        <end position="340"/>
    </location>
</feature>
<feature type="strand" evidence="20">
    <location>
        <begin position="347"/>
        <end position="356"/>
    </location>
</feature>
<feature type="helix" evidence="20">
    <location>
        <begin position="368"/>
        <end position="381"/>
    </location>
</feature>
<feature type="helix" evidence="20">
    <location>
        <begin position="386"/>
        <end position="388"/>
    </location>
</feature>
<feature type="strand" evidence="20">
    <location>
        <begin position="389"/>
        <end position="393"/>
    </location>
</feature>
<feature type="helix" evidence="20">
    <location>
        <begin position="402"/>
        <end position="413"/>
    </location>
</feature>
<feature type="turn" evidence="20">
    <location>
        <begin position="414"/>
        <end position="417"/>
    </location>
</feature>
<feature type="strand" evidence="20">
    <location>
        <begin position="424"/>
        <end position="427"/>
    </location>
</feature>
<feature type="helix" evidence="20">
    <location>
        <begin position="430"/>
        <end position="433"/>
    </location>
</feature>
<feature type="helix" evidence="20">
    <location>
        <begin position="437"/>
        <end position="439"/>
    </location>
</feature>
<feature type="helix" evidence="20">
    <location>
        <begin position="440"/>
        <end position="454"/>
    </location>
</feature>
<feature type="strand" evidence="20">
    <location>
        <begin position="464"/>
        <end position="466"/>
    </location>
</feature>
<feature type="helix" evidence="20">
    <location>
        <begin position="472"/>
        <end position="475"/>
    </location>
</feature>
<feature type="strand" evidence="20">
    <location>
        <begin position="477"/>
        <end position="479"/>
    </location>
</feature>
<feature type="strand" evidence="20">
    <location>
        <begin position="496"/>
        <end position="502"/>
    </location>
</feature>
<feature type="strand" evidence="20">
    <location>
        <begin position="506"/>
        <end position="515"/>
    </location>
</feature>
<feature type="strand" evidence="20">
    <location>
        <begin position="540"/>
        <end position="548"/>
    </location>
</feature>
<feature type="helix" evidence="20">
    <location>
        <begin position="549"/>
        <end position="563"/>
    </location>
</feature>
<feature type="helix" evidence="20">
    <location>
        <begin position="583"/>
        <end position="592"/>
    </location>
</feature>
<feature type="strand" evidence="20">
    <location>
        <begin position="598"/>
        <end position="607"/>
    </location>
</feature>
<feature type="helix" evidence="20">
    <location>
        <begin position="608"/>
        <end position="615"/>
    </location>
</feature>
<feature type="helix" evidence="20">
    <location>
        <begin position="618"/>
        <end position="620"/>
    </location>
</feature>
<feature type="strand" evidence="20">
    <location>
        <begin position="621"/>
        <end position="625"/>
    </location>
</feature>
<feature type="strand" evidence="20">
    <location>
        <begin position="630"/>
        <end position="636"/>
    </location>
</feature>
<feature type="turn" evidence="20">
    <location>
        <begin position="644"/>
        <end position="647"/>
    </location>
</feature>
<feature type="helix" evidence="20">
    <location>
        <begin position="648"/>
        <end position="653"/>
    </location>
</feature>
<feature type="helix" evidence="20">
    <location>
        <begin position="655"/>
        <end position="672"/>
    </location>
</feature>
<feature type="helix" evidence="20">
    <location>
        <begin position="676"/>
        <end position="680"/>
    </location>
</feature>
<feature type="helix" evidence="20">
    <location>
        <begin position="692"/>
        <end position="712"/>
    </location>
</feature>
<feature type="strand" evidence="20">
    <location>
        <begin position="718"/>
        <end position="722"/>
    </location>
</feature>
<feature type="helix" evidence="20">
    <location>
        <begin position="726"/>
        <end position="733"/>
    </location>
</feature>
<feature type="helix" evidence="20">
    <location>
        <begin position="739"/>
        <end position="756"/>
    </location>
</feature>
<feature type="turn" evidence="20">
    <location>
        <begin position="757"/>
        <end position="760"/>
    </location>
</feature>
<feature type="strand" evidence="20">
    <location>
        <begin position="762"/>
        <end position="768"/>
    </location>
</feature>
<feature type="helix" evidence="20">
    <location>
        <begin position="770"/>
        <end position="776"/>
    </location>
</feature>
<feature type="turn" evidence="20">
    <location>
        <begin position="777"/>
        <end position="779"/>
    </location>
</feature>
<feature type="strand" evidence="20">
    <location>
        <begin position="783"/>
        <end position="790"/>
    </location>
</feature>
<feature type="strand" evidence="20">
    <location>
        <begin position="793"/>
        <end position="798"/>
    </location>
</feature>
<feature type="helix" evidence="20">
    <location>
        <begin position="800"/>
        <end position="812"/>
    </location>
</feature>
<feature type="strand" evidence="20">
    <location>
        <begin position="817"/>
        <end position="821"/>
    </location>
</feature>
<feature type="helix" evidence="20">
    <location>
        <begin position="830"/>
        <end position="834"/>
    </location>
</feature>
<feature type="helix" evidence="20">
    <location>
        <begin position="835"/>
        <end position="841"/>
    </location>
</feature>
<feature type="strand" evidence="20">
    <location>
        <begin position="854"/>
        <end position="856"/>
    </location>
</feature>
<feature type="turn" evidence="20">
    <location>
        <begin position="857"/>
        <end position="860"/>
    </location>
</feature>
<feature type="strand" evidence="20">
    <location>
        <begin position="861"/>
        <end position="863"/>
    </location>
</feature>
<feature type="helix" evidence="20">
    <location>
        <begin position="870"/>
        <end position="878"/>
    </location>
</feature>
<feature type="helix" evidence="20">
    <location>
        <begin position="883"/>
        <end position="892"/>
    </location>
</feature>
<feature type="strand" evidence="20">
    <location>
        <begin position="896"/>
        <end position="901"/>
    </location>
</feature>
<feature type="strand" evidence="20">
    <location>
        <begin position="903"/>
        <end position="905"/>
    </location>
</feature>
<feature type="helix" evidence="20">
    <location>
        <begin position="909"/>
        <end position="911"/>
    </location>
</feature>
<feature type="strand" evidence="20">
    <location>
        <begin position="916"/>
        <end position="919"/>
    </location>
</feature>
<feature type="helix" evidence="20">
    <location>
        <begin position="929"/>
        <end position="940"/>
    </location>
</feature>
<feature type="turn" evidence="20">
    <location>
        <begin position="941"/>
        <end position="943"/>
    </location>
</feature>
<feature type="helix" evidence="20">
    <location>
        <begin position="949"/>
        <end position="951"/>
    </location>
</feature>
<proteinExistence type="evidence at protein level"/>
<accession>Q9ZGI5</accession>
<sequence length="4613" mass="477293">MSSAGITRTGARTPVTGRGAAAWDTGEVRVRRGLPPAGPDHAEHSFSRAPTGDVRAELIRGEMSTVSKSESEEFVSVSNDAGSAHGTAEPVAVVGISCRVPGARDPREFWELLAAGGQAVTDVPADRWNAGDFYDPDRSAPGRSNSRWGGFIEDVDRFDAAFFGISPREAAEMDPQQRLALELGWEALERAGIDPSSLTGTRTGVFAGAIWDDYATLKHRQGGAAITPHTVTGLHRGIIANRLSYTLGLRGPSMVVDSGQSSSLVAVHLACESLRRGESELALAGGVSLNLVPDSIIGASKFGGLSPDGRAYTFDARANGYVRGEGGGFVVLKRLSRAVADGDPVLAVIRGSAVNNGGAAQGMTTPDAQAQEAVLREAHERAGTAPADVRYVELHGTGTPVGDPIEAAALGAALGTGRPAGQPLLVGSVKTNIGHLEGAAGIAGLIKAVLAVRGRALPASLNYETPNPAIPFEELNLRVNTEYLPWEPEHDGQRMVVGVSSFGMGGTNAHVVLEEAPGGCRGASVVESTVGGSAVGGGVVPWVVSAKSAAALDAQIERLAAFASRDRTDGVDAGAVDAGAVDAGAVARVLAGGRAQFEHRAVVVGSGPDDLAAALAAPEGLVRGVASGVGRVAFVFPGQGTQWAGMGAELLDSSAVFAAAMAECEAALSPYVDWSLEAVVRQAPGAPTLERVDVVQPVTFAVMVSLARVWQHHGVTPQAVVGHSQGEIAAAYVAGALSLDDAARVVTLRSKSIAAHLAGKGGMLSLALSEDAVLERLAGFDGLSVAAVNGPTATVVSGDPVQIEELARACEADGVRARVIPVDYASHSRQVEIIESELAEVLAGLSPQAPRVPFFSTLEGAWITEPVLDGGYWYRNLRHRVGFAPAVETLATDEGFTHFVEVSAHPVLTMALPGTVTGLATLRRDNGGQDRLVASLAEAWANGLAVDWSPLLPSATGHHSDLPTYAFQTERHWLGEIEALAPAGEPAVQPAVLRTEAAEPAELDRDEQLRVILDKVRAQTAQVLGYATGGQIEVDRTFREAGCTSLTGVDLRNRINAAFGVRMAPSMIFDFPTPEALAEQLLLVVHGEAAANPAGAEPAPVAAAGAVDEPVAIVGMACRLPGGVASPEDLWRLVAGGGDAISEFPQDRGWDVEGLYHPDPEHPGTSYVRQGGFIENVAGFDAAFFGISPREALAMDPQQRLLLETSWEAVEDAGIDPTSLRGRQVGVFTGAMTHEYGPSLRDGGEGLDGYLLTGNTASVMSGRVSYTLGLEGPALTVDTACSSSLVALHLAVQALRKGEVDMALAGGVAVMPTPGMFVEFSRQRGLAGDGRSKAFAASADGTSWSEGVGVLLVERLSDARRNGHQVLAVVRGSALNQDGASNGLTAPNGPSQQRVIRRALADARLTTSDVDVVEAHGTGTRLGDPIEAQALIATYGQGRDDEQPLRLGSLKSNIGHTQAAAGVSGVIKMVQAMRHGLLPKTLHVDEPSDQIDWSAGAVELLTEAVDWPEKQDGGLRRAAVSSFGISGTNAHVVLEEAPVVVEGASVVEPSVGGSAVGGGVTPWVVSAKSAAALDAQIERLAAFASRDRTDDADAGAVDAGAVAHVLADGRAQFEHRAVALGAGADDLVQALADPDGLIRGTASGVGRVAFVFPGQGTQWAGMGAELLDSSAVFAAAMAECEAALSPYVDWSLEAVVRQAPGAPTLERVDVVQPVTFAVMVSLARVWQHHGVTPQAVVGHSQGEIAAAYVAGALPLDDAARVVTLRSKSIAAHLAGKGGMLSLALNEDAVLERLSDFDGLSVAAVNGPTATVVSGDPVQIEELAQACKADGFRARIIPVDYASHSRQVEIIESELAQVLAGLSPQAPRVPFFSTLEGTWITEPVLDGTYWYRNLRHRVGFAPAIETLAVDEGFTHFVEVSAHPVLTMTLPETVTGLGTLRREQGGQERLVTSLAEAWVNGLPVAWTSLLPATASRPGLPTYAFQAERYWLENTPAALATGDDWRYRIDWKRLPAAEGSERTGLSGRWLAVTPEDHSAQAAAVLTALVDAGAKVEVLTAGADDDREALAARLTALTTGDGFTGVVSLLDGLVPQVAWVQALGDAGIKAPLWSVTQGAVSVGRLDTPADPDRAMLWGLGRVVALEHPERWAGLVDLPAQPDAAALAHLVTALSGATGEDQIAIRTTGLHARRLARAPLHGRRPTRDWQPHGTVLITGGTGALGSHAARWMAHHGAEHLLLVSRSGEQAPGATQLTAELTASGARVTIAACDVADPHAMRTLLDAIPAETPLTAVVHTAGALDDGIVDTLTAEQVRRAHRAKAVGASVLDELTRDLDLDAFVLFSSVSSTLGIPGQGNYAPHNAYLDALAARRRATGRSAVSVAWGPWDGGGMAAGDGVAERLRNHGVPGMDPELALAALESALGRDETAITVADIDWDRFYLAYSSGRPQPLVEELPEVRRIIDARDSATSGQGGSSAQGANPLAERLAAAAPGERTEILLGLVRAQAAAVLRMRSPEDVAADRAFKDIGFDSLAGVELRNRLTRATGLQLPATLVFDHPTPLALVSLLRSEFLGDEETADARRSAALPATVGAGAGAGAGTDADDDPIAIVAMSCRYPGDIRSPEDLWRMLSEGGEGITPFPTDRGWDLDGLYDADPDALGRAYVREGGFLHDAAEFDAEFFGVSPREALAMDPQQRMLLTTSWEAFERAGIEPASLRGSSTGVFIGLSYQDYAARVPNAPRGVEGYLLTGSTPSVASGRIAYTFGLEGPATTVDTACSSSLTALHLAVRALRSGECTMALAGGVAMMATPHMFVEFSRQRALAPDGRSKAFSADADGFGAAEGVGLLLVERLSDARRNGHPVLAVVRGTAVNQDGASNGLTAPNGPSQQRVIRQALADARLAPGDIDAVETHGTGTSLGDPIEAQGLQATYGKERPAERPLAIGSVKSNIGHTQAAAGAAGIIKMVLAMRHGTLPKTLHADEPSPHVDWANSGLALVTEPIDWPAGTGPRRAAVSSFGISGTNAHVVLEQAPDAAGEVLGADEVPEVSETVAMAGTAGTSEVAEGSEASEAPAAPGSREASLPGHLPWVLSAKDEQSLRGQAAALHAWLSEPAADLSDADGPARLRDVGYTLATSRTAFAHRAAVTAADRDGFLDGLATLAQGGTSAHVHLDTARDGTTAFLFTGQGSQRPGAGRELYDRHPVFARALDEICAHLDGHLELPLLDVMFAAEGSAEAALLDETRYTQCALFALEVALFRLVESWGMRPAALLGHSVGEIAAAHVAGVFSLADAARLVAARGRLMQELPAGGAMLAVQAAEDEIRVWLETEERYAGRLDVAAVNGPEAAVLSGDADAAREAEAYWSGLGRRTRALRVSHAFHSAHMDGMLDGFRAVLETVEFRRPSLTVVSNVTGLAAGPDDLCDPEYWVRHVRGTVRFLDGVRVLRDLGVRTCLELGPDGVLTAMAADGLADTPADSAAGSPVGSPAGSPADSAAGALRPRPLLVALLRRKRSETETVADALGRAHAHGTGPDWHAWFAGSGAHRVDLPTYSFRRDRYWLDAPAADTAVDTAGLGLGTADHPLLGAVVSLPDRDGLLLTGRLSLRTHPWLADHAVLGSVLLPGAAMVELAAHAAESAGLRDVRELTLLEPLVLPEHGGVELRVTVGAPAGEPGGESAGDGARPVSLHSRLADAPAGTAWSCHATGLLATDRPELPVAPDRAAMWPPQGAEEVPLDGLYERLDGNGLAFGPLFQGLNAVWRYEGEVFADIALPATTNATAPATANGGGSAAAAPYGIHPALLDASLHAIAVGGLVDEPELVRVPFHWSGVTVHAAGAAAARVRLASAGTDAVSLSLTDGEGRPLVSVERLTLRPVTADQAAASRVGGLMHRVAWRPYALASSGEQDPHATSYGPTAVLGKDELKVAAALESAGVEVGLYPDLAALSQDVAAGAPAPRTVLAPLPAGPADGGAEGVRGTVARTLELLQAWLADEHLAGTRLLLVTRGAVRDPEGSGADDGGEDLSHAAAWGLVRTAQTENPGRFGLLDLADDASSYRTLPSVLSDAGLRDEPQLALHDGTIRLARLASVRPETGTAAPALAPEGTVLLTGGTGGLGGLVARHVVGEWGVRRLLLVSRRGTDAPGADELVHELEALGADVSVAACDVADREALTAVLDAIPAEHPLTAVVHTAGVLSDGTLPSMTTEDVEHVLRPKVDAAFLLDELTSTPAYDLAAFVMFSSAAAVFGGAGQGAYAAANATLDALAWRRRAAGLPALSLGWGLWAETSGMTGELGQADLRRMSRAGIGGISDAEGIALLDAALRDDRHPVLLPLRLDAAGLRDAAGNDPAGIPALFRDVVGARTVRARPSAASASTTAGTAGTPGTADGAAETAAVTLADRAATVDGPARQRLLLEFVVGEVAEVLGHARGHRIDAERGFLDLGFDSLTAVELRNRLNSAGGLALPATLVFDHPSPAALASHLDAELPRGASDQDGAGNRNGNENGTTASRSTAETDALLAQLTRLEGALVLTGLSDAPGSEEVLEHLRSLRSMVTGETGTGTASGAPDGAGSGAEDRPWAAGDGAGGGSEDGAGVPDFMNASAEELFGLLDQDPSTD</sequence>
<evidence type="ECO:0000250" key="1">
    <source>
        <dbReference type="UniProtKB" id="Q03131"/>
    </source>
</evidence>
<evidence type="ECO:0000250" key="2">
    <source>
        <dbReference type="UniProtKB" id="Q03132"/>
    </source>
</evidence>
<evidence type="ECO:0000250" key="3">
    <source>
        <dbReference type="UniProtKB" id="Q03133"/>
    </source>
</evidence>
<evidence type="ECO:0000250" key="4">
    <source>
        <dbReference type="UniProtKB" id="Q9ZGI4"/>
    </source>
</evidence>
<evidence type="ECO:0000255" key="5">
    <source>
        <dbReference type="PROSITE-ProRule" id="PRU00258"/>
    </source>
</evidence>
<evidence type="ECO:0000255" key="6">
    <source>
        <dbReference type="PROSITE-ProRule" id="PRU01348"/>
    </source>
</evidence>
<evidence type="ECO:0000255" key="7">
    <source>
        <dbReference type="PROSITE-ProRule" id="PRU01363"/>
    </source>
</evidence>
<evidence type="ECO:0000255" key="8">
    <source>
        <dbReference type="PROSITE-ProRule" id="PRU10022"/>
    </source>
</evidence>
<evidence type="ECO:0000256" key="9">
    <source>
        <dbReference type="SAM" id="MobiDB-lite"/>
    </source>
</evidence>
<evidence type="ECO:0000269" key="10">
    <source>
    </source>
</evidence>
<evidence type="ECO:0000269" key="11">
    <source>
    </source>
</evidence>
<evidence type="ECO:0000269" key="12">
    <source>
    </source>
</evidence>
<evidence type="ECO:0000269" key="13">
    <source>
    </source>
</evidence>
<evidence type="ECO:0000303" key="14">
    <source>
    </source>
</evidence>
<evidence type="ECO:0000303" key="15">
    <source>
    </source>
</evidence>
<evidence type="ECO:0000305" key="16"/>
<evidence type="ECO:0000305" key="17">
    <source>
    </source>
</evidence>
<evidence type="ECO:0000305" key="18">
    <source>
    </source>
</evidence>
<evidence type="ECO:0000305" key="19">
    <source>
    </source>
</evidence>
<evidence type="ECO:0007829" key="20">
    <source>
        <dbReference type="PDB" id="7UWR"/>
    </source>
</evidence>
<protein>
    <recommendedName>
        <fullName evidence="14">Pikromycin polyketide synthase component PikAI</fullName>
        <shortName evidence="14">Pikromycin PKS component PikAI</shortName>
        <ecNumber evidence="10 18">2.3.1.239</ecNumber>
        <ecNumber evidence="10 18">2.3.1.240</ecNumber>
    </recommendedName>
    <alternativeName>
        <fullName evidence="16">Narbonolide/10-deoxymethynolide synthase PikA1, modules 1 and 2</fullName>
    </alternativeName>
    <alternativeName>
        <fullName evidence="16">Narbonolide/10-deoxymethynolide synthase PikAI</fullName>
    </alternativeName>
    <alternativeName>
        <fullName evidence="14">Type I modular polyketide synthase PikAI</fullName>
        <shortName evidence="14">PKS</shortName>
    </alternativeName>
</protein>
<gene>
    <name evidence="15" type="primary">pikAI</name>
</gene>